<accession>P69018</accession>
<accession>P82392</accession>
<organism>
    <name type="scientific">Ranoidea raniformis</name>
    <name type="common">Southern bell frog</name>
    <name type="synonym">Litoria raniformis</name>
    <dbReference type="NCBI Taxonomy" id="116057"/>
    <lineage>
        <taxon>Eukaryota</taxon>
        <taxon>Metazoa</taxon>
        <taxon>Chordata</taxon>
        <taxon>Craniata</taxon>
        <taxon>Vertebrata</taxon>
        <taxon>Euteleostomi</taxon>
        <taxon>Amphibia</taxon>
        <taxon>Batrachia</taxon>
        <taxon>Anura</taxon>
        <taxon>Neobatrachia</taxon>
        <taxon>Hyloidea</taxon>
        <taxon>Hylidae</taxon>
        <taxon>Pelodryadinae</taxon>
        <taxon>Ranoidea</taxon>
    </lineage>
</organism>
<comment type="function">
    <text evidence="1 2 3 5">Amphipathic alpha-helical antimicrobial peptide with moderate to potent activity against Gram-positive bacteria, Gram-negative bacteria and fungi (By similarity) (PubMed:10951191, PubMed:19056250, PubMed:23841919). Also shows a weak activity against biofilm of both Gram-positive and Gram-negative bacteria (PubMed:19056250). Probably acts by disturbing membrane functions with its amphipathic structure (PubMed:10951191, PubMed:23841919). Kills fungi via membranolytic action (By similarity). Enhanced sterol levels in lipid composition membranes reduce interaction of this peptide with membranes, having a protective effect against the lytic ability of the peptide (By similarity). Shows anticancer activity (PubMed:10951191).</text>
</comment>
<comment type="subunit">
    <text evidence="1">May be monomeric or may oligomerize as homodimers or homotrimers in Gram-positive and Gram-negative bacteria mimetic membranes.</text>
</comment>
<comment type="subcellular location">
    <subcellularLocation>
        <location evidence="2">Secreted</location>
    </subcellularLocation>
    <subcellularLocation>
        <location evidence="1">Target cell membrane</location>
    </subcellularLocation>
    <text evidence="1">Contact and insertion into membrane begin at the N-terminus.</text>
</comment>
<comment type="tissue specificity">
    <text evidence="8">Expressed by the skin dorsal glands.</text>
</comment>
<comment type="PTM">
    <text evidence="4">C-terminal amidation enhances antibacterial activity. This increase may be due to stabilization of the alpha-helical structure at the membrane interface.</text>
</comment>
<comment type="miscellaneous">
    <text evidence="7">The primary structure of the mature peptide is identical to that of aurein-2.5 from Ranoidea aurea (AC P69019).</text>
</comment>
<comment type="similarity">
    <text evidence="7">Belongs to the frog skin active peptide (FSAP) family. Aurein subfamily.</text>
</comment>
<comment type="online information" name="The antimicrobial peptide database">
    <link uri="https://wangapd3.com/database/query_output.php?ID=00018"/>
</comment>
<proteinExistence type="evidence at protein level"/>
<reference key="1">
    <citation type="journal article" date="2000" name="Eur. J. Biochem.">
        <title>The antibiotic and anticancer active aurein peptides from the australian bell frogs Litoria aurea and Litoria raniformis the solution structure of aurein 1.2.</title>
        <authorList>
            <person name="Rozek T."/>
            <person name="Wegener K.L."/>
            <person name="Bowie J.H."/>
            <person name="Olver I.N."/>
            <person name="Carver J.A."/>
            <person name="Wallace J.C."/>
            <person name="Tyler M.J."/>
        </authorList>
    </citation>
    <scope>PROTEIN SEQUENCE</scope>
    <scope>FUNCTION</scope>
    <scope>AMIDATION AT LEU-16</scope>
    <scope>SUBCELLULAR LOCATION</scope>
    <source>
        <tissue>Skin secretion</tissue>
    </source>
</reference>
<reference key="2">
    <citation type="journal article" date="2009" name="Colloids Surf. B Biointerfaces">
        <title>A study on the interactions of Aurein 2.5 with bacterial membranes.</title>
        <authorList>
            <person name="Dennison S.R."/>
            <person name="Morton L.H."/>
            <person name="Shorrocks A.J."/>
            <person name="Harris F."/>
            <person name="Phoenix D.A."/>
        </authorList>
    </citation>
    <scope>FUNCTION</scope>
    <scope>SYNTHESIS</scope>
</reference>
<reference key="3">
    <citation type="journal article" date="2012" name="Protein Pept. Lett.">
        <title>Effect of amidation on the antimicrobial peptide aurein 2.5 from Australian southern bell frogs.</title>
        <authorList>
            <person name="Dennison S.R."/>
            <person name="Morton L.H."/>
            <person name="Phoenix D.A."/>
        </authorList>
    </citation>
    <scope>PTM</scope>
</reference>
<reference key="4">
    <citation type="journal article" date="2013" name="FEMS Microbiol. Lett.">
        <title>Antimicrobial activity of aurein 2.5 against yeasts.</title>
        <authorList>
            <person name="Dennison S.R."/>
            <person name="Harris F."/>
            <person name="Morton L.H."/>
            <person name="Phoenix D.A."/>
        </authorList>
    </citation>
    <scope>FUNCTION</scope>
    <scope>SYNTHESIS</scope>
</reference>
<name>AUR25_RANRN</name>
<sequence length="16" mass="1650">GLFDIVKKVVGAFGSL</sequence>
<protein>
    <recommendedName>
        <fullName evidence="6">Aurein-2.5</fullName>
    </recommendedName>
</protein>
<keyword id="KW-0027">Amidation</keyword>
<keyword id="KW-0878">Amphibian defense peptide</keyword>
<keyword id="KW-0044">Antibiotic</keyword>
<keyword id="KW-0929">Antimicrobial</keyword>
<keyword id="KW-0903">Direct protein sequencing</keyword>
<keyword id="KW-0295">Fungicide</keyword>
<keyword id="KW-0446">Lipid-binding</keyword>
<keyword id="KW-0472">Membrane</keyword>
<keyword id="KW-0964">Secreted</keyword>
<keyword id="KW-1052">Target cell membrane</keyword>
<keyword id="KW-1053">Target membrane</keyword>
<dbReference type="GO" id="GO:0005576">
    <property type="term" value="C:extracellular region"/>
    <property type="evidence" value="ECO:0007669"/>
    <property type="project" value="UniProtKB-SubCell"/>
</dbReference>
<dbReference type="GO" id="GO:0016020">
    <property type="term" value="C:membrane"/>
    <property type="evidence" value="ECO:0007669"/>
    <property type="project" value="UniProtKB-KW"/>
</dbReference>
<dbReference type="GO" id="GO:0044218">
    <property type="term" value="C:other organism cell membrane"/>
    <property type="evidence" value="ECO:0007669"/>
    <property type="project" value="UniProtKB-KW"/>
</dbReference>
<dbReference type="GO" id="GO:0008289">
    <property type="term" value="F:lipid binding"/>
    <property type="evidence" value="ECO:0007669"/>
    <property type="project" value="UniProtKB-KW"/>
</dbReference>
<dbReference type="GO" id="GO:0042742">
    <property type="term" value="P:defense response to bacterium"/>
    <property type="evidence" value="ECO:0007669"/>
    <property type="project" value="UniProtKB-KW"/>
</dbReference>
<dbReference type="GO" id="GO:0050832">
    <property type="term" value="P:defense response to fungus"/>
    <property type="evidence" value="ECO:0007669"/>
    <property type="project" value="UniProtKB-KW"/>
</dbReference>
<dbReference type="GO" id="GO:0031640">
    <property type="term" value="P:killing of cells of another organism"/>
    <property type="evidence" value="ECO:0007669"/>
    <property type="project" value="UniProtKB-KW"/>
</dbReference>
<dbReference type="InterPro" id="IPR013157">
    <property type="entry name" value="Aurein_antimicrobial_peptide"/>
</dbReference>
<dbReference type="Pfam" id="PF08256">
    <property type="entry name" value="Antimicrobial20"/>
    <property type="match status" value="1"/>
</dbReference>
<evidence type="ECO:0000250" key="1">
    <source>
        <dbReference type="UniProtKB" id="P69019"/>
    </source>
</evidence>
<evidence type="ECO:0000269" key="2">
    <source>
    </source>
</evidence>
<evidence type="ECO:0000269" key="3">
    <source>
    </source>
</evidence>
<evidence type="ECO:0000269" key="4">
    <source>
    </source>
</evidence>
<evidence type="ECO:0000269" key="5">
    <source>
    </source>
</evidence>
<evidence type="ECO:0000303" key="6">
    <source>
    </source>
</evidence>
<evidence type="ECO:0000305" key="7"/>
<evidence type="ECO:0000305" key="8">
    <source>
    </source>
</evidence>
<feature type="peptide" id="PRO_0000043721" description="Aurein-2.5" evidence="2">
    <location>
        <begin position="1"/>
        <end position="16"/>
    </location>
</feature>
<feature type="modified residue" description="Leucine amide" evidence="2">
    <location>
        <position position="16"/>
    </location>
</feature>